<reference evidence="7 8" key="1">
    <citation type="journal article" date="2005" name="Peptides">
        <title>Characterization of neuropeptide F and its receptor from the African malaria mosquito, Anopheles gambiae.</title>
        <authorList>
            <person name="Garczynski S.F."/>
            <person name="Crim J.W."/>
            <person name="Brown M.R."/>
        </authorList>
    </citation>
    <scope>NUCLEOTIDE SEQUENCE [MRNA]</scope>
    <scope>DEVELOPMENTAL STAGE</scope>
    <source>
        <strain>G3</strain>
        <tissue evidence="8">Head</tissue>
    </source>
</reference>
<reference evidence="9" key="2">
    <citation type="journal article" date="2002" name="Science">
        <title>The genome sequence of the malaria mosquito Anopheles gambiae.</title>
        <authorList>
            <person name="Holt R.A."/>
            <person name="Subramanian G.M."/>
            <person name="Halpern A."/>
            <person name="Sutton G.G."/>
            <person name="Charlab R."/>
            <person name="Nusskern D.R."/>
            <person name="Wincker P."/>
            <person name="Clark A.G."/>
            <person name="Ribeiro J.M.C."/>
            <person name="Wides R."/>
            <person name="Salzberg S.L."/>
            <person name="Loftus B.J."/>
            <person name="Yandell M.D."/>
            <person name="Majoros W.H."/>
            <person name="Rusch D.B."/>
            <person name="Lai Z."/>
            <person name="Kraft C.L."/>
            <person name="Abril J.F."/>
            <person name="Anthouard V."/>
            <person name="Arensburger P."/>
            <person name="Atkinson P.W."/>
            <person name="Baden H."/>
            <person name="de Berardinis V."/>
            <person name="Baldwin D."/>
            <person name="Benes V."/>
            <person name="Biedler J."/>
            <person name="Blass C."/>
            <person name="Bolanos R."/>
            <person name="Boscus D."/>
            <person name="Barnstead M."/>
            <person name="Cai S."/>
            <person name="Center A."/>
            <person name="Chaturverdi K."/>
            <person name="Christophides G.K."/>
            <person name="Chrystal M.A.M."/>
            <person name="Clamp M."/>
            <person name="Cravchik A."/>
            <person name="Curwen V."/>
            <person name="Dana A."/>
            <person name="Delcher A."/>
            <person name="Dew I."/>
            <person name="Evans C.A."/>
            <person name="Flanigan M."/>
            <person name="Grundschober-Freimoser A."/>
            <person name="Friedli L."/>
            <person name="Gu Z."/>
            <person name="Guan P."/>
            <person name="Guigo R."/>
            <person name="Hillenmeyer M.E."/>
            <person name="Hladun S.L."/>
            <person name="Hogan J.R."/>
            <person name="Hong Y.S."/>
            <person name="Hoover J."/>
            <person name="Jaillon O."/>
            <person name="Ke Z."/>
            <person name="Kodira C.D."/>
            <person name="Kokoza E."/>
            <person name="Koutsos A."/>
            <person name="Letunic I."/>
            <person name="Levitsky A.A."/>
            <person name="Liang Y."/>
            <person name="Lin J.-J."/>
            <person name="Lobo N.F."/>
            <person name="Lopez J.R."/>
            <person name="Malek J.A."/>
            <person name="McIntosh T.C."/>
            <person name="Meister S."/>
            <person name="Miller J.R."/>
            <person name="Mobarry C."/>
            <person name="Mongin E."/>
            <person name="Murphy S.D."/>
            <person name="O'Brochta D.A."/>
            <person name="Pfannkoch C."/>
            <person name="Qi R."/>
            <person name="Regier M.A."/>
            <person name="Remington K."/>
            <person name="Shao H."/>
            <person name="Sharakhova M.V."/>
            <person name="Sitter C.D."/>
            <person name="Shetty J."/>
            <person name="Smith T.J."/>
            <person name="Strong R."/>
            <person name="Sun J."/>
            <person name="Thomasova D."/>
            <person name="Ton L.Q."/>
            <person name="Topalis P."/>
            <person name="Tu Z.J."/>
            <person name="Unger M.F."/>
            <person name="Walenz B."/>
            <person name="Wang A.H."/>
            <person name="Wang J."/>
            <person name="Wang M."/>
            <person name="Wang X."/>
            <person name="Woodford K.J."/>
            <person name="Wortman J.R."/>
            <person name="Wu M."/>
            <person name="Yao A."/>
            <person name="Zdobnov E.M."/>
            <person name="Zhang H."/>
            <person name="Zhao Q."/>
            <person name="Zhao S."/>
            <person name="Zhu S.C."/>
            <person name="Zhimulev I."/>
            <person name="Coluzzi M."/>
            <person name="della Torre A."/>
            <person name="Roth C.W."/>
            <person name="Louis C."/>
            <person name="Kalush F."/>
            <person name="Mural R.J."/>
            <person name="Myers E.W."/>
            <person name="Adams M.D."/>
            <person name="Smith H.O."/>
            <person name="Broder S."/>
            <person name="Gardner M.J."/>
            <person name="Fraser C.M."/>
            <person name="Birney E."/>
            <person name="Bork P."/>
            <person name="Brey P.T."/>
            <person name="Venter J.C."/>
            <person name="Weissenbach J."/>
            <person name="Kafatos F.C."/>
            <person name="Collins F.H."/>
            <person name="Hoffman S.L."/>
        </authorList>
    </citation>
    <scope>NUCLEOTIDE SEQUENCE [LARGE SCALE GENOMIC DNA]</scope>
    <source>
        <strain evidence="9">PEST</strain>
    </source>
</reference>
<reference evidence="7" key="3">
    <citation type="journal article" date="2002" name="Science">
        <title>Neuropeptides and peptide hormones in Anopheles gambiae.</title>
        <authorList>
            <person name="Riehle M.A."/>
            <person name="Garczynski S.F."/>
            <person name="Crim J.W."/>
            <person name="Hill C.A."/>
            <person name="Brown M.R."/>
        </authorList>
    </citation>
    <scope>PROTEIN SEQUENCE OF 30-61</scope>
    <scope>AMIDATION AT PHE-61</scope>
</reference>
<name>NPF_ANOGA</name>
<proteinExistence type="evidence at protein level"/>
<sequence length="89" mass="9838">MASGTFTQRLLVALMIFALIADLSTLVAARPQDSDAASVAAAIRYLQELETKHAQHARPRFGKRGGYLNPAIFGQDEQEVDWQDSTFSR</sequence>
<keyword id="KW-0027">Amidation</keyword>
<keyword id="KW-0165">Cleavage on pair of basic residues</keyword>
<keyword id="KW-0222">Digestion</keyword>
<keyword id="KW-0903">Direct protein sequencing</keyword>
<keyword id="KW-0372">Hormone</keyword>
<keyword id="KW-0527">Neuropeptide</keyword>
<keyword id="KW-1185">Reference proteome</keyword>
<keyword id="KW-0964">Secreted</keyword>
<keyword id="KW-0732">Signal</keyword>
<accession>Q7Q7R8</accession>
<accession>Q5QGM6</accession>
<evidence type="ECO:0000250" key="1"/>
<evidence type="ECO:0000250" key="2">
    <source>
        <dbReference type="UniProtKB" id="Q8MP00"/>
    </source>
</evidence>
<evidence type="ECO:0000250" key="3">
    <source>
        <dbReference type="UniProtKB" id="Q9VET0"/>
    </source>
</evidence>
<evidence type="ECO:0000255" key="4"/>
<evidence type="ECO:0000269" key="5">
    <source>
    </source>
</evidence>
<evidence type="ECO:0000269" key="6">
    <source>
    </source>
</evidence>
<evidence type="ECO:0000305" key="7"/>
<evidence type="ECO:0000312" key="8">
    <source>
        <dbReference type="EMBL" id="AAT81601.1"/>
    </source>
</evidence>
<evidence type="ECO:0000312" key="9">
    <source>
        <dbReference type="EMBL" id="EAA10607.3"/>
    </source>
</evidence>
<protein>
    <recommendedName>
        <fullName>Neuropeptide F</fullName>
        <shortName>Ang-NPF</shortName>
    </recommendedName>
</protein>
<gene>
    <name evidence="9" type="primary">npf</name>
    <name type="ORF">AGAP004642</name>
</gene>
<feature type="signal peptide" evidence="5">
    <location>
        <begin position="1"/>
        <end position="29"/>
    </location>
</feature>
<feature type="chain" id="PRO_0000283077" description="Neuropeptide F" evidence="5">
    <location>
        <begin position="30"/>
        <end position="61"/>
    </location>
</feature>
<feature type="propeptide" id="PRO_0000283078" evidence="5">
    <location>
        <begin position="65"/>
        <end position="89"/>
    </location>
</feature>
<feature type="modified residue" description="Phenylalanine amide" evidence="5">
    <location>
        <position position="61"/>
    </location>
</feature>
<organism>
    <name type="scientific">Anopheles gambiae</name>
    <name type="common">African malaria mosquito</name>
    <dbReference type="NCBI Taxonomy" id="7165"/>
    <lineage>
        <taxon>Eukaryota</taxon>
        <taxon>Metazoa</taxon>
        <taxon>Ecdysozoa</taxon>
        <taxon>Arthropoda</taxon>
        <taxon>Hexapoda</taxon>
        <taxon>Insecta</taxon>
        <taxon>Pterygota</taxon>
        <taxon>Neoptera</taxon>
        <taxon>Endopterygota</taxon>
        <taxon>Diptera</taxon>
        <taxon>Nematocera</taxon>
        <taxon>Culicoidea</taxon>
        <taxon>Culicidae</taxon>
        <taxon>Anophelinae</taxon>
        <taxon>Anopheles</taxon>
    </lineage>
</organism>
<comment type="function">
    <text evidence="2 3">An integral part of the sensory system that mediates food signaling, providing the neural basis for the regulation of food response; coordinates larval foraging and social behavior changes during development. May have a hormonal role in females (By similarity).</text>
</comment>
<comment type="subcellular location">
    <subcellularLocation>
        <location evidence="1">Secreted</location>
    </subcellularLocation>
</comment>
<comment type="developmental stage">
    <text evidence="6">Expressed both maternally and zygotically in larvae, pupae, and the heads of adults.</text>
</comment>
<comment type="similarity">
    <text evidence="4">Belongs to the NPY family.</text>
</comment>
<comment type="sequence caution" evidence="7">
    <conflict type="miscellaneous discrepancy">
        <sequence resource="EMBL-CDS" id="AAT81601"/>
    </conflict>
    <text>Intron retention.</text>
</comment>
<dbReference type="EMBL" id="AY579077">
    <property type="protein sequence ID" value="AAT81601.1"/>
    <property type="status" value="ALT_SEQ"/>
    <property type="molecule type" value="mRNA"/>
</dbReference>
<dbReference type="EMBL" id="AAAB01008952">
    <property type="protein sequence ID" value="EAA10607.3"/>
    <property type="molecule type" value="Genomic_DNA"/>
</dbReference>
<dbReference type="RefSeq" id="XP_315165.3">
    <property type="nucleotide sequence ID" value="XM_315165.4"/>
</dbReference>
<dbReference type="SMR" id="Q7Q7R8"/>
<dbReference type="FunCoup" id="Q7Q7R8">
    <property type="interactions" value="30"/>
</dbReference>
<dbReference type="STRING" id="7165.Q7Q7R8"/>
<dbReference type="PaxDb" id="7165-AGAP004642-PA"/>
<dbReference type="EnsemblMetazoa" id="AGAP004642-RA">
    <property type="protein sequence ID" value="AGAP004642-PA"/>
    <property type="gene ID" value="AGAP004642"/>
</dbReference>
<dbReference type="VEuPathDB" id="VectorBase:AGAP004642"/>
<dbReference type="eggNOG" id="ENOG502TC38">
    <property type="taxonomic scope" value="Eukaryota"/>
</dbReference>
<dbReference type="HOGENOM" id="CLU_2456617_0_0_1"/>
<dbReference type="InParanoid" id="Q7Q7R8"/>
<dbReference type="OMA" id="HARPRCQ"/>
<dbReference type="PhylomeDB" id="Q7Q7R8"/>
<dbReference type="Proteomes" id="UP000007062">
    <property type="component" value="Chromosome 2R"/>
</dbReference>
<dbReference type="GO" id="GO:0005576">
    <property type="term" value="C:extracellular region"/>
    <property type="evidence" value="ECO:0000250"/>
    <property type="project" value="UniProtKB"/>
</dbReference>
<dbReference type="GO" id="GO:0005184">
    <property type="term" value="F:neuropeptide hormone activity"/>
    <property type="evidence" value="ECO:0000250"/>
    <property type="project" value="UniProtKB"/>
</dbReference>
<dbReference type="GO" id="GO:0007586">
    <property type="term" value="P:digestion"/>
    <property type="evidence" value="ECO:0007669"/>
    <property type="project" value="UniProtKB-KW"/>
</dbReference>
<dbReference type="GO" id="GO:0035177">
    <property type="term" value="P:larval foraging behavior"/>
    <property type="evidence" value="ECO:0000250"/>
    <property type="project" value="UniProtKB"/>
</dbReference>
<dbReference type="GO" id="GO:0007218">
    <property type="term" value="P:neuropeptide signaling pathway"/>
    <property type="evidence" value="ECO:0007669"/>
    <property type="project" value="UniProtKB-KW"/>
</dbReference>
<dbReference type="GO" id="GO:0032095">
    <property type="term" value="P:regulation of response to food"/>
    <property type="evidence" value="ECO:0000250"/>
    <property type="project" value="UniProtKB"/>
</dbReference>
<dbReference type="GO" id="GO:0035176">
    <property type="term" value="P:social behavior"/>
    <property type="evidence" value="ECO:0000250"/>
    <property type="project" value="UniProtKB"/>
</dbReference>